<reference key="1">
    <citation type="submission" date="2006-03" db="EMBL/GenBank/DDBJ databases">
        <title>Complete genome sequence of Gemmatimonas aurantiaca T-27 that represents a novel phylum Gemmatimonadetes.</title>
        <authorList>
            <person name="Takasaki K."/>
            <person name="Ichikawa N."/>
            <person name="Miura H."/>
            <person name="Matsushita S."/>
            <person name="Watanabe Y."/>
            <person name="Oguchi A."/>
            <person name="Ankai A."/>
            <person name="Yashiro I."/>
            <person name="Takahashi M."/>
            <person name="Terui Y."/>
            <person name="Fukui S."/>
            <person name="Yokoyama H."/>
            <person name="Tanikawa S."/>
            <person name="Hanada S."/>
            <person name="Kamagata Y."/>
            <person name="Fujita N."/>
        </authorList>
    </citation>
    <scope>NUCLEOTIDE SEQUENCE [LARGE SCALE GENOMIC DNA]</scope>
    <source>
        <strain>DSM 14586 / JCM 11422 / NBRC 100505 / T-27</strain>
    </source>
</reference>
<gene>
    <name evidence="1" type="primary">sucC</name>
    <name type="ordered locus">GAU_1646</name>
</gene>
<accession>C1A8X8</accession>
<dbReference type="EC" id="6.2.1.5" evidence="1"/>
<dbReference type="EMBL" id="AP009153">
    <property type="protein sequence ID" value="BAH38688.1"/>
    <property type="molecule type" value="Genomic_DNA"/>
</dbReference>
<dbReference type="RefSeq" id="WP_012683135.1">
    <property type="nucleotide sequence ID" value="NC_012489.1"/>
</dbReference>
<dbReference type="SMR" id="C1A8X8"/>
<dbReference type="STRING" id="379066.GAU_1646"/>
<dbReference type="KEGG" id="gau:GAU_1646"/>
<dbReference type="eggNOG" id="COG0045">
    <property type="taxonomic scope" value="Bacteria"/>
</dbReference>
<dbReference type="HOGENOM" id="CLU_037430_0_2_0"/>
<dbReference type="OrthoDB" id="9802602at2"/>
<dbReference type="UniPathway" id="UPA00223">
    <property type="reaction ID" value="UER00999"/>
</dbReference>
<dbReference type="Proteomes" id="UP000002209">
    <property type="component" value="Chromosome"/>
</dbReference>
<dbReference type="GO" id="GO:0005829">
    <property type="term" value="C:cytosol"/>
    <property type="evidence" value="ECO:0007669"/>
    <property type="project" value="TreeGrafter"/>
</dbReference>
<dbReference type="GO" id="GO:0042709">
    <property type="term" value="C:succinate-CoA ligase complex"/>
    <property type="evidence" value="ECO:0007669"/>
    <property type="project" value="TreeGrafter"/>
</dbReference>
<dbReference type="GO" id="GO:0005524">
    <property type="term" value="F:ATP binding"/>
    <property type="evidence" value="ECO:0007669"/>
    <property type="project" value="UniProtKB-UniRule"/>
</dbReference>
<dbReference type="GO" id="GO:0000287">
    <property type="term" value="F:magnesium ion binding"/>
    <property type="evidence" value="ECO:0007669"/>
    <property type="project" value="UniProtKB-UniRule"/>
</dbReference>
<dbReference type="GO" id="GO:0004775">
    <property type="term" value="F:succinate-CoA ligase (ADP-forming) activity"/>
    <property type="evidence" value="ECO:0007669"/>
    <property type="project" value="UniProtKB-UniRule"/>
</dbReference>
<dbReference type="GO" id="GO:0004776">
    <property type="term" value="F:succinate-CoA ligase (GDP-forming) activity"/>
    <property type="evidence" value="ECO:0007669"/>
    <property type="project" value="RHEA"/>
</dbReference>
<dbReference type="GO" id="GO:0006104">
    <property type="term" value="P:succinyl-CoA metabolic process"/>
    <property type="evidence" value="ECO:0007669"/>
    <property type="project" value="TreeGrafter"/>
</dbReference>
<dbReference type="GO" id="GO:0006099">
    <property type="term" value="P:tricarboxylic acid cycle"/>
    <property type="evidence" value="ECO:0007669"/>
    <property type="project" value="UniProtKB-UniRule"/>
</dbReference>
<dbReference type="FunFam" id="3.30.470.20:FF:000002">
    <property type="entry name" value="Succinate--CoA ligase [ADP-forming] subunit beta"/>
    <property type="match status" value="1"/>
</dbReference>
<dbReference type="FunFam" id="3.40.50.261:FF:000001">
    <property type="entry name" value="Succinate--CoA ligase [ADP-forming] subunit beta"/>
    <property type="match status" value="1"/>
</dbReference>
<dbReference type="Gene3D" id="3.30.1490.20">
    <property type="entry name" value="ATP-grasp fold, A domain"/>
    <property type="match status" value="1"/>
</dbReference>
<dbReference type="Gene3D" id="3.30.470.20">
    <property type="entry name" value="ATP-grasp fold, B domain"/>
    <property type="match status" value="1"/>
</dbReference>
<dbReference type="Gene3D" id="3.40.50.261">
    <property type="entry name" value="Succinyl-CoA synthetase domains"/>
    <property type="match status" value="1"/>
</dbReference>
<dbReference type="HAMAP" id="MF_00558">
    <property type="entry name" value="Succ_CoA_beta"/>
    <property type="match status" value="1"/>
</dbReference>
<dbReference type="InterPro" id="IPR011761">
    <property type="entry name" value="ATP-grasp"/>
</dbReference>
<dbReference type="InterPro" id="IPR013650">
    <property type="entry name" value="ATP-grasp_succ-CoA_synth-type"/>
</dbReference>
<dbReference type="InterPro" id="IPR013815">
    <property type="entry name" value="ATP_grasp_subdomain_1"/>
</dbReference>
<dbReference type="InterPro" id="IPR017866">
    <property type="entry name" value="Succ-CoA_synthase_bsu_CS"/>
</dbReference>
<dbReference type="InterPro" id="IPR005811">
    <property type="entry name" value="SUCC_ACL_C"/>
</dbReference>
<dbReference type="InterPro" id="IPR005809">
    <property type="entry name" value="Succ_CoA_ligase-like_bsu"/>
</dbReference>
<dbReference type="InterPro" id="IPR016102">
    <property type="entry name" value="Succinyl-CoA_synth-like"/>
</dbReference>
<dbReference type="NCBIfam" id="NF001913">
    <property type="entry name" value="PRK00696.1"/>
    <property type="match status" value="1"/>
</dbReference>
<dbReference type="NCBIfam" id="TIGR01016">
    <property type="entry name" value="sucCoAbeta"/>
    <property type="match status" value="1"/>
</dbReference>
<dbReference type="PANTHER" id="PTHR11815:SF10">
    <property type="entry name" value="SUCCINATE--COA LIGASE [GDP-FORMING] SUBUNIT BETA, MITOCHONDRIAL"/>
    <property type="match status" value="1"/>
</dbReference>
<dbReference type="PANTHER" id="PTHR11815">
    <property type="entry name" value="SUCCINYL-COA SYNTHETASE BETA CHAIN"/>
    <property type="match status" value="1"/>
</dbReference>
<dbReference type="Pfam" id="PF08442">
    <property type="entry name" value="ATP-grasp_2"/>
    <property type="match status" value="1"/>
</dbReference>
<dbReference type="Pfam" id="PF00549">
    <property type="entry name" value="Ligase_CoA"/>
    <property type="match status" value="1"/>
</dbReference>
<dbReference type="PIRSF" id="PIRSF001554">
    <property type="entry name" value="SucCS_beta"/>
    <property type="match status" value="1"/>
</dbReference>
<dbReference type="SUPFAM" id="SSF56059">
    <property type="entry name" value="Glutathione synthetase ATP-binding domain-like"/>
    <property type="match status" value="1"/>
</dbReference>
<dbReference type="SUPFAM" id="SSF52210">
    <property type="entry name" value="Succinyl-CoA synthetase domains"/>
    <property type="match status" value="1"/>
</dbReference>
<dbReference type="PROSITE" id="PS50975">
    <property type="entry name" value="ATP_GRASP"/>
    <property type="match status" value="1"/>
</dbReference>
<dbReference type="PROSITE" id="PS01217">
    <property type="entry name" value="SUCCINYL_COA_LIG_3"/>
    <property type="match status" value="1"/>
</dbReference>
<comment type="function">
    <text evidence="1">Succinyl-CoA synthetase functions in the citric acid cycle (TCA), coupling the hydrolysis of succinyl-CoA to the synthesis of either ATP or GTP and thus represents the only step of substrate-level phosphorylation in the TCA. The beta subunit provides nucleotide specificity of the enzyme and binds the substrate succinate, while the binding sites for coenzyme A and phosphate are found in the alpha subunit.</text>
</comment>
<comment type="catalytic activity">
    <reaction evidence="1">
        <text>succinate + ATP + CoA = succinyl-CoA + ADP + phosphate</text>
        <dbReference type="Rhea" id="RHEA:17661"/>
        <dbReference type="ChEBI" id="CHEBI:30031"/>
        <dbReference type="ChEBI" id="CHEBI:30616"/>
        <dbReference type="ChEBI" id="CHEBI:43474"/>
        <dbReference type="ChEBI" id="CHEBI:57287"/>
        <dbReference type="ChEBI" id="CHEBI:57292"/>
        <dbReference type="ChEBI" id="CHEBI:456216"/>
        <dbReference type="EC" id="6.2.1.5"/>
    </reaction>
    <physiologicalReaction direction="right-to-left" evidence="1">
        <dbReference type="Rhea" id="RHEA:17663"/>
    </physiologicalReaction>
</comment>
<comment type="catalytic activity">
    <reaction evidence="1">
        <text>GTP + succinate + CoA = succinyl-CoA + GDP + phosphate</text>
        <dbReference type="Rhea" id="RHEA:22120"/>
        <dbReference type="ChEBI" id="CHEBI:30031"/>
        <dbReference type="ChEBI" id="CHEBI:37565"/>
        <dbReference type="ChEBI" id="CHEBI:43474"/>
        <dbReference type="ChEBI" id="CHEBI:57287"/>
        <dbReference type="ChEBI" id="CHEBI:57292"/>
        <dbReference type="ChEBI" id="CHEBI:58189"/>
    </reaction>
    <physiologicalReaction direction="right-to-left" evidence="1">
        <dbReference type="Rhea" id="RHEA:22122"/>
    </physiologicalReaction>
</comment>
<comment type="cofactor">
    <cofactor evidence="1">
        <name>Mg(2+)</name>
        <dbReference type="ChEBI" id="CHEBI:18420"/>
    </cofactor>
    <text evidence="1">Binds 1 Mg(2+) ion per subunit.</text>
</comment>
<comment type="pathway">
    <text evidence="1">Carbohydrate metabolism; tricarboxylic acid cycle; succinate from succinyl-CoA (ligase route): step 1/1.</text>
</comment>
<comment type="subunit">
    <text evidence="1">Heterotetramer of two alpha and two beta subunits.</text>
</comment>
<comment type="similarity">
    <text evidence="1">Belongs to the succinate/malate CoA ligase beta subunit family.</text>
</comment>
<name>SUCC_GEMAT</name>
<sequence length="381" mass="40327">MNLHEYQAKELLRVAGVPIPPGEIATTPEQAEAIAKKLGTAVMVKAQVHAGGRGKAGGVKFCPTPEAAKEKATAILGMTIKDLTVEKVLVTVAADIASEAYVGIIVDRATKKPVFMVSAAGGIDIEEVAATTPEKILYHPVDTRYGLLPFEAMRMGFFLYQDVKLARQAAKIMQQLYTAFMSAGCSIAEINPLVVTPQNELIAVDGKMVIDDNELDRLPQIAALRDESSEAPSEVDARNANLTFIKLDGNVGCVVNGAGLAMATMDLVKYYGGDPANFLDIGGSSNPEKVVNALRIITADPNVKCILFNIFGGITRTDDVANGIVTATKANPLKVPIVIRLTGTNEELALQILKENGFSASSDMDSAVQRAVELATKGGAA</sequence>
<organism>
    <name type="scientific">Gemmatimonas aurantiaca (strain DSM 14586 / JCM 11422 / NBRC 100505 / T-27)</name>
    <dbReference type="NCBI Taxonomy" id="379066"/>
    <lineage>
        <taxon>Bacteria</taxon>
        <taxon>Pseudomonadati</taxon>
        <taxon>Gemmatimonadota</taxon>
        <taxon>Gemmatimonadia</taxon>
        <taxon>Gemmatimonadales</taxon>
        <taxon>Gemmatimonadaceae</taxon>
        <taxon>Gemmatimonas</taxon>
    </lineage>
</organism>
<proteinExistence type="inferred from homology"/>
<feature type="chain" id="PRO_1000212024" description="Succinate--CoA ligase [ADP-forming] subunit beta">
    <location>
        <begin position="1"/>
        <end position="381"/>
    </location>
</feature>
<feature type="domain" description="ATP-grasp" evidence="1">
    <location>
        <begin position="9"/>
        <end position="236"/>
    </location>
</feature>
<feature type="binding site" evidence="1">
    <location>
        <position position="45"/>
    </location>
    <ligand>
        <name>ATP</name>
        <dbReference type="ChEBI" id="CHEBI:30616"/>
    </ligand>
</feature>
<feature type="binding site" evidence="1">
    <location>
        <begin position="52"/>
        <end position="54"/>
    </location>
    <ligand>
        <name>ATP</name>
        <dbReference type="ChEBI" id="CHEBI:30616"/>
    </ligand>
</feature>
<feature type="binding site" evidence="1">
    <location>
        <position position="94"/>
    </location>
    <ligand>
        <name>ATP</name>
        <dbReference type="ChEBI" id="CHEBI:30616"/>
    </ligand>
</feature>
<feature type="binding site" evidence="1">
    <location>
        <position position="99"/>
    </location>
    <ligand>
        <name>ATP</name>
        <dbReference type="ChEBI" id="CHEBI:30616"/>
    </ligand>
</feature>
<feature type="binding site" evidence="1">
    <location>
        <position position="191"/>
    </location>
    <ligand>
        <name>Mg(2+)</name>
        <dbReference type="ChEBI" id="CHEBI:18420"/>
    </ligand>
</feature>
<feature type="binding site" evidence="1">
    <location>
        <position position="205"/>
    </location>
    <ligand>
        <name>Mg(2+)</name>
        <dbReference type="ChEBI" id="CHEBI:18420"/>
    </ligand>
</feature>
<feature type="binding site" evidence="1">
    <location>
        <position position="256"/>
    </location>
    <ligand>
        <name>substrate</name>
        <note>ligand shared with subunit alpha</note>
    </ligand>
</feature>
<feature type="binding site" evidence="1">
    <location>
        <begin position="313"/>
        <end position="315"/>
    </location>
    <ligand>
        <name>substrate</name>
        <note>ligand shared with subunit alpha</note>
    </ligand>
</feature>
<evidence type="ECO:0000255" key="1">
    <source>
        <dbReference type="HAMAP-Rule" id="MF_00558"/>
    </source>
</evidence>
<protein>
    <recommendedName>
        <fullName evidence="1">Succinate--CoA ligase [ADP-forming] subunit beta</fullName>
        <ecNumber evidence="1">6.2.1.5</ecNumber>
    </recommendedName>
    <alternativeName>
        <fullName evidence="1">Succinyl-CoA synthetase subunit beta</fullName>
        <shortName evidence="1">SCS-beta</shortName>
    </alternativeName>
</protein>
<keyword id="KW-0067">ATP-binding</keyword>
<keyword id="KW-0436">Ligase</keyword>
<keyword id="KW-0460">Magnesium</keyword>
<keyword id="KW-0479">Metal-binding</keyword>
<keyword id="KW-0547">Nucleotide-binding</keyword>
<keyword id="KW-1185">Reference proteome</keyword>
<keyword id="KW-0816">Tricarboxylic acid cycle</keyword>